<accession>P19107</accession>
<accession>Q9VSN6</accession>
<feature type="chain" id="PRO_0000205217" description="Phosrestin-1">
    <location>
        <begin position="1"/>
        <end position="401"/>
    </location>
</feature>
<feature type="modified residue" description="Phosphoserine; by CaMK" evidence="3">
    <location>
        <position position="366"/>
    </location>
</feature>
<feature type="sequence variant">
    <original>N</original>
    <variation>S</variation>
    <location>
        <position position="109"/>
    </location>
</feature>
<feature type="mutagenesis site" description="In photoreceptors, leads to an equivalent distribution of per in the nuclei in both day and night ultimately resulting in a decrease in Bdbt foci development." evidence="2">
    <original>V</original>
    <variation>D</variation>
    <location>
        <position position="52"/>
    </location>
</feature>
<feature type="sequence conflict" description="In Ref. 1; AAA28833." evidence="5" ref="1">
    <original>Y</original>
    <variation>H</variation>
    <location>
        <position position="111"/>
    </location>
</feature>
<name>ARRB_DROME</name>
<dbReference type="EMBL" id="M32141">
    <property type="protein sequence ID" value="AAA28833.1"/>
    <property type="molecule type" value="Genomic_DNA"/>
</dbReference>
<dbReference type="EMBL" id="AE014296">
    <property type="protein sequence ID" value="AAF50380.1"/>
    <property type="molecule type" value="Genomic_DNA"/>
</dbReference>
<dbReference type="PIR" id="A34856">
    <property type="entry name" value="A34856"/>
</dbReference>
<dbReference type="RefSeq" id="NP_523976.1">
    <property type="nucleotide sequence ID" value="NM_079252.3"/>
</dbReference>
<dbReference type="SMR" id="P19107"/>
<dbReference type="BioGRID" id="64400">
    <property type="interactions" value="15"/>
</dbReference>
<dbReference type="DIP" id="DIP-20598N"/>
<dbReference type="FunCoup" id="P19107">
    <property type="interactions" value="35"/>
</dbReference>
<dbReference type="IntAct" id="P19107">
    <property type="interactions" value="3"/>
</dbReference>
<dbReference type="MINT" id="P19107"/>
<dbReference type="STRING" id="7227.FBpp0076326"/>
<dbReference type="GlyGen" id="P19107">
    <property type="glycosylation" value="1 site"/>
</dbReference>
<dbReference type="iPTMnet" id="P19107"/>
<dbReference type="PaxDb" id="7227-FBpp0076326"/>
<dbReference type="DNASU" id="38993"/>
<dbReference type="EnsemblMetazoa" id="FBtr0076599">
    <property type="protein sequence ID" value="FBpp0076326"/>
    <property type="gene ID" value="FBgn0000121"/>
</dbReference>
<dbReference type="GeneID" id="38993"/>
<dbReference type="KEGG" id="dme:Dmel_CG5962"/>
<dbReference type="AGR" id="FB:FBgn0000121"/>
<dbReference type="CTD" id="38993"/>
<dbReference type="FlyBase" id="FBgn0000121">
    <property type="gene designation" value="Arr2"/>
</dbReference>
<dbReference type="VEuPathDB" id="VectorBase:FBgn0000121"/>
<dbReference type="eggNOG" id="KOG3865">
    <property type="taxonomic scope" value="Eukaryota"/>
</dbReference>
<dbReference type="HOGENOM" id="CLU_033484_1_1_1"/>
<dbReference type="InParanoid" id="P19107"/>
<dbReference type="OMA" id="RYENSCY"/>
<dbReference type="OrthoDB" id="298939at2759"/>
<dbReference type="PhylomeDB" id="P19107"/>
<dbReference type="Reactome" id="R-DME-418555">
    <property type="pathway name" value="G alpha (s) signalling events"/>
</dbReference>
<dbReference type="Reactome" id="R-DME-432720">
    <property type="pathway name" value="Lysosome Vesicle Biogenesis"/>
</dbReference>
<dbReference type="Reactome" id="R-DME-432722">
    <property type="pathway name" value="Golgi Associated Vesicle Biogenesis"/>
</dbReference>
<dbReference type="Reactome" id="R-DME-456926">
    <property type="pathway name" value="Thrombin signalling through proteinase activated receptors (PARs)"/>
</dbReference>
<dbReference type="Reactome" id="R-DME-5674135">
    <property type="pathway name" value="MAP2K and MAPK activation"/>
</dbReference>
<dbReference type="Reactome" id="R-DME-5689880">
    <property type="pathway name" value="Ub-specific processing proteases"/>
</dbReference>
<dbReference type="Reactome" id="R-DME-8856825">
    <property type="pathway name" value="Cargo recognition for clathrin-mediated endocytosis"/>
</dbReference>
<dbReference type="Reactome" id="R-DME-8856828">
    <property type="pathway name" value="Clathrin-mediated endocytosis"/>
</dbReference>
<dbReference type="Reactome" id="R-DME-9839389">
    <property type="pathway name" value="TGFBR3 regulates TGF-beta signaling"/>
</dbReference>
<dbReference type="SignaLink" id="P19107"/>
<dbReference type="BioGRID-ORCS" id="38993">
    <property type="hits" value="0 hits in 1 CRISPR screen"/>
</dbReference>
<dbReference type="ChiTaRS" id="Arr2">
    <property type="organism name" value="fly"/>
</dbReference>
<dbReference type="GenomeRNAi" id="38993"/>
<dbReference type="PRO" id="PR:P19107"/>
<dbReference type="Proteomes" id="UP000000803">
    <property type="component" value="Chromosome 3L"/>
</dbReference>
<dbReference type="Bgee" id="FBgn0000121">
    <property type="expression patterns" value="Expressed in dorsal margin photoreceptor (Drosophila) in insect head and 109 other cell types or tissues"/>
</dbReference>
<dbReference type="ExpressionAtlas" id="P19107">
    <property type="expression patterns" value="baseline and differential"/>
</dbReference>
<dbReference type="GO" id="GO:0005737">
    <property type="term" value="C:cytoplasm"/>
    <property type="evidence" value="ECO:0000314"/>
    <property type="project" value="FlyBase"/>
</dbReference>
<dbReference type="GO" id="GO:0016028">
    <property type="term" value="C:rhabdomere"/>
    <property type="evidence" value="ECO:0000314"/>
    <property type="project" value="FlyBase"/>
</dbReference>
<dbReference type="GO" id="GO:0016029">
    <property type="term" value="C:subrhabdomeral cisterna"/>
    <property type="evidence" value="ECO:0000314"/>
    <property type="project" value="FlyBase"/>
</dbReference>
<dbReference type="GO" id="GO:0001664">
    <property type="term" value="F:G protein-coupled receptor binding"/>
    <property type="evidence" value="ECO:0000318"/>
    <property type="project" value="GO_Central"/>
</dbReference>
<dbReference type="GO" id="GO:0002046">
    <property type="term" value="F:opsin binding"/>
    <property type="evidence" value="ECO:0000304"/>
    <property type="project" value="FlyBase"/>
</dbReference>
<dbReference type="GO" id="GO:0002029">
    <property type="term" value="P:desensitization of G protein-coupled receptor signaling pathway"/>
    <property type="evidence" value="ECO:0000315"/>
    <property type="project" value="FlyBase"/>
</dbReference>
<dbReference type="GO" id="GO:0002031">
    <property type="term" value="P:G protein-coupled receptor internalization"/>
    <property type="evidence" value="ECO:0000318"/>
    <property type="project" value="GO_Central"/>
</dbReference>
<dbReference type="GO" id="GO:0016059">
    <property type="term" value="P:negative regulation of opsin-mediated signaling pathway"/>
    <property type="evidence" value="ECO:0000315"/>
    <property type="project" value="FlyBase"/>
</dbReference>
<dbReference type="GO" id="GO:0016060">
    <property type="term" value="P:negative regulation of phospholipase C-activating phototransduction signaling pathway"/>
    <property type="evidence" value="ECO:0000315"/>
    <property type="project" value="FlyBase"/>
</dbReference>
<dbReference type="GO" id="GO:0045494">
    <property type="term" value="P:photoreceptor cell maintenance"/>
    <property type="evidence" value="ECO:0000315"/>
    <property type="project" value="FlyBase"/>
</dbReference>
<dbReference type="GO" id="GO:0007608">
    <property type="term" value="P:sensory perception of smell"/>
    <property type="evidence" value="ECO:0000315"/>
    <property type="project" value="FlyBase"/>
</dbReference>
<dbReference type="GO" id="GO:0007605">
    <property type="term" value="P:sensory perception of sound"/>
    <property type="evidence" value="ECO:0000315"/>
    <property type="project" value="FlyBase"/>
</dbReference>
<dbReference type="GO" id="GO:0007165">
    <property type="term" value="P:signal transduction"/>
    <property type="evidence" value="ECO:0007669"/>
    <property type="project" value="InterPro"/>
</dbReference>
<dbReference type="GO" id="GO:0007601">
    <property type="term" value="P:visual perception"/>
    <property type="evidence" value="ECO:0007669"/>
    <property type="project" value="UniProtKB-KW"/>
</dbReference>
<dbReference type="FunFam" id="2.60.40.840:FF:000002">
    <property type="entry name" value="Arrestin 3"/>
    <property type="match status" value="1"/>
</dbReference>
<dbReference type="FunFam" id="2.60.40.640:FF:000020">
    <property type="entry name" value="Arrestin, Arr2"/>
    <property type="match status" value="1"/>
</dbReference>
<dbReference type="Gene3D" id="2.60.40.640">
    <property type="match status" value="1"/>
</dbReference>
<dbReference type="Gene3D" id="2.60.40.840">
    <property type="match status" value="1"/>
</dbReference>
<dbReference type="InterPro" id="IPR000698">
    <property type="entry name" value="Arrestin"/>
</dbReference>
<dbReference type="InterPro" id="IPR014752">
    <property type="entry name" value="Arrestin-like_C"/>
</dbReference>
<dbReference type="InterPro" id="IPR011021">
    <property type="entry name" value="Arrestin-like_N"/>
</dbReference>
<dbReference type="InterPro" id="IPR011022">
    <property type="entry name" value="Arrestin_C-like"/>
</dbReference>
<dbReference type="InterPro" id="IPR017864">
    <property type="entry name" value="Arrestin_CS"/>
</dbReference>
<dbReference type="InterPro" id="IPR014753">
    <property type="entry name" value="Arrestin_N"/>
</dbReference>
<dbReference type="InterPro" id="IPR014756">
    <property type="entry name" value="Ig_E-set"/>
</dbReference>
<dbReference type="PANTHER" id="PTHR11792">
    <property type="entry name" value="ARRESTIN"/>
    <property type="match status" value="1"/>
</dbReference>
<dbReference type="PANTHER" id="PTHR11792:SF23">
    <property type="entry name" value="PHOSRESTIN-1"/>
    <property type="match status" value="1"/>
</dbReference>
<dbReference type="Pfam" id="PF02752">
    <property type="entry name" value="Arrestin_C"/>
    <property type="match status" value="1"/>
</dbReference>
<dbReference type="Pfam" id="PF00339">
    <property type="entry name" value="Arrestin_N"/>
    <property type="match status" value="1"/>
</dbReference>
<dbReference type="PRINTS" id="PR00309">
    <property type="entry name" value="ARRESTIN"/>
</dbReference>
<dbReference type="SMART" id="SM01017">
    <property type="entry name" value="Arrestin_C"/>
    <property type="match status" value="1"/>
</dbReference>
<dbReference type="SUPFAM" id="SSF81296">
    <property type="entry name" value="E set domains"/>
    <property type="match status" value="2"/>
</dbReference>
<dbReference type="PROSITE" id="PS00295">
    <property type="entry name" value="ARRESTINS"/>
    <property type="match status" value="1"/>
</dbReference>
<comment type="function">
    <text evidence="2 4">Regulates photoreceptor cell deactivation (PubMed:36994075, PubMed:8316831). Arr1 and Arr2 proteins are mediators of rhodopsin inactivation and are essential for the termination of the phototransduction cascade (PubMed:8316831). Involved in regulating normal cycles of per nuclear accumulation in brain circadian neurons and thus is important for normal circadian behavior (PubMed:36994075). In the dark, functions with Arr1 to promote the formation of cytosolic Bdbt foci, which are required for dco localization to photoreceptor nuclei where it phosphorylates and activates degradation of per (PubMed:36994075).</text>
</comment>
<comment type="subcellular location">
    <subcellularLocation>
        <location evidence="4">Cell projection</location>
        <location evidence="4">Rhabdomere</location>
    </subcellularLocation>
</comment>
<comment type="tissue specificity">
    <text evidence="4">Expressed in photoreceptor cells.</text>
</comment>
<comment type="PTM">
    <text evidence="1 3">Phosphorylated upon light exposure.</text>
</comment>
<comment type="similarity">
    <text evidence="5">Belongs to the arrestin family.</text>
</comment>
<sequence>MVVSVKVFKKATPNGKVTFYLGRRDFIDHIDYCDPVDGVIVVEPDYLKNRKVFGQLATTYRYGREEDEVMGVKFSKELILCREQIVPMTNPNMEMTPMQEKLVRKLGSNAYPFTFHFPPNSPSSVTLQQEGDDNGKPLGVEYTIRAFVGDSEDDRQHKRSMVSLVIKKLQYAPLNRGQRLPSSLVSKGFTFSNGKISLEVTLDREIYYHGEKTAATVQVSNNSKKSVKSIKCFIVQHTEITMVNAQFSKHVAQLETKEGCPITPGANLTKTFYLIPLAANNKDRHGIALDGHLKDEDVNLASSTMVQEGKSTGDACGIVISYSVRIKLNCGTLGGEMQTDVPFKLLQPAPGTIEKKRSNAMKKMKSIEQHRNVKGYYQDDDDNIVFEDFAKMRMNNVNMAD</sequence>
<evidence type="ECO:0000269" key="1">
    <source>
    </source>
</evidence>
<evidence type="ECO:0000269" key="2">
    <source>
    </source>
</evidence>
<evidence type="ECO:0000269" key="3">
    <source>
    </source>
</evidence>
<evidence type="ECO:0000269" key="4">
    <source>
    </source>
</evidence>
<evidence type="ECO:0000305" key="5"/>
<proteinExistence type="evidence at protein level"/>
<keyword id="KW-0966">Cell projection</keyword>
<keyword id="KW-0597">Phosphoprotein</keyword>
<keyword id="KW-1185">Reference proteome</keyword>
<keyword id="KW-0716">Sensory transduction</keyword>
<keyword id="KW-0844">Vision</keyword>
<protein>
    <recommendedName>
        <fullName>Phosrestin-1</fullName>
    </recommendedName>
    <alternativeName>
        <fullName>49 kDa arrestin-like protein</fullName>
    </alternativeName>
    <alternativeName>
        <fullName>Arrestin-2</fullName>
    </alternativeName>
    <alternativeName>
        <fullName>Arrestin-B</fullName>
    </alternativeName>
    <alternativeName>
        <fullName>Phosrestin I</fullName>
    </alternativeName>
</protein>
<gene>
    <name type="primary">Arr2</name>
    <name type="synonym">ArrB</name>
    <name type="ORF">CG5962</name>
</gene>
<organism>
    <name type="scientific">Drosophila melanogaster</name>
    <name type="common">Fruit fly</name>
    <dbReference type="NCBI Taxonomy" id="7227"/>
    <lineage>
        <taxon>Eukaryota</taxon>
        <taxon>Metazoa</taxon>
        <taxon>Ecdysozoa</taxon>
        <taxon>Arthropoda</taxon>
        <taxon>Hexapoda</taxon>
        <taxon>Insecta</taxon>
        <taxon>Pterygota</taxon>
        <taxon>Neoptera</taxon>
        <taxon>Endopterygota</taxon>
        <taxon>Diptera</taxon>
        <taxon>Brachycera</taxon>
        <taxon>Muscomorpha</taxon>
        <taxon>Ephydroidea</taxon>
        <taxon>Drosophilidae</taxon>
        <taxon>Drosophila</taxon>
        <taxon>Sophophora</taxon>
    </lineage>
</organism>
<reference key="1">
    <citation type="journal article" date="1990" name="Science">
        <title>A 49-kilodalton phosphoprotein in the Drosophila photoreceptor is an arrestin homolog.</title>
        <authorList>
            <person name="Yamada T."/>
            <person name="Takeuchi Y."/>
            <person name="Kmoroi N."/>
            <person name="Kobayashi H."/>
            <person name="Sakai Y."/>
            <person name="Hotta Y."/>
            <person name="Matsumoto H."/>
        </authorList>
    </citation>
    <scope>NUCLEOTIDE SEQUENCE [GENOMIC DNA]</scope>
</reference>
<reference key="2">
    <citation type="journal article" date="2000" name="Science">
        <title>The genome sequence of Drosophila melanogaster.</title>
        <authorList>
            <person name="Adams M.D."/>
            <person name="Celniker S.E."/>
            <person name="Holt R.A."/>
            <person name="Evans C.A."/>
            <person name="Gocayne J.D."/>
            <person name="Amanatides P.G."/>
            <person name="Scherer S.E."/>
            <person name="Li P.W."/>
            <person name="Hoskins R.A."/>
            <person name="Galle R.F."/>
            <person name="George R.A."/>
            <person name="Lewis S.E."/>
            <person name="Richards S."/>
            <person name="Ashburner M."/>
            <person name="Henderson S.N."/>
            <person name="Sutton G.G."/>
            <person name="Wortman J.R."/>
            <person name="Yandell M.D."/>
            <person name="Zhang Q."/>
            <person name="Chen L.X."/>
            <person name="Brandon R.C."/>
            <person name="Rogers Y.-H.C."/>
            <person name="Blazej R.G."/>
            <person name="Champe M."/>
            <person name="Pfeiffer B.D."/>
            <person name="Wan K.H."/>
            <person name="Doyle C."/>
            <person name="Baxter E.G."/>
            <person name="Helt G."/>
            <person name="Nelson C.R."/>
            <person name="Miklos G.L.G."/>
            <person name="Abril J.F."/>
            <person name="Agbayani A."/>
            <person name="An H.-J."/>
            <person name="Andrews-Pfannkoch C."/>
            <person name="Baldwin D."/>
            <person name="Ballew R.M."/>
            <person name="Basu A."/>
            <person name="Baxendale J."/>
            <person name="Bayraktaroglu L."/>
            <person name="Beasley E.M."/>
            <person name="Beeson K.Y."/>
            <person name="Benos P.V."/>
            <person name="Berman B.P."/>
            <person name="Bhandari D."/>
            <person name="Bolshakov S."/>
            <person name="Borkova D."/>
            <person name="Botchan M.R."/>
            <person name="Bouck J."/>
            <person name="Brokstein P."/>
            <person name="Brottier P."/>
            <person name="Burtis K.C."/>
            <person name="Busam D.A."/>
            <person name="Butler H."/>
            <person name="Cadieu E."/>
            <person name="Center A."/>
            <person name="Chandra I."/>
            <person name="Cherry J.M."/>
            <person name="Cawley S."/>
            <person name="Dahlke C."/>
            <person name="Davenport L.B."/>
            <person name="Davies P."/>
            <person name="de Pablos B."/>
            <person name="Delcher A."/>
            <person name="Deng Z."/>
            <person name="Mays A.D."/>
            <person name="Dew I."/>
            <person name="Dietz S.M."/>
            <person name="Dodson K."/>
            <person name="Doup L.E."/>
            <person name="Downes M."/>
            <person name="Dugan-Rocha S."/>
            <person name="Dunkov B.C."/>
            <person name="Dunn P."/>
            <person name="Durbin K.J."/>
            <person name="Evangelista C.C."/>
            <person name="Ferraz C."/>
            <person name="Ferriera S."/>
            <person name="Fleischmann W."/>
            <person name="Fosler C."/>
            <person name="Gabrielian A.E."/>
            <person name="Garg N.S."/>
            <person name="Gelbart W.M."/>
            <person name="Glasser K."/>
            <person name="Glodek A."/>
            <person name="Gong F."/>
            <person name="Gorrell J.H."/>
            <person name="Gu Z."/>
            <person name="Guan P."/>
            <person name="Harris M."/>
            <person name="Harris N.L."/>
            <person name="Harvey D.A."/>
            <person name="Heiman T.J."/>
            <person name="Hernandez J.R."/>
            <person name="Houck J."/>
            <person name="Hostin D."/>
            <person name="Houston K.A."/>
            <person name="Howland T.J."/>
            <person name="Wei M.-H."/>
            <person name="Ibegwam C."/>
            <person name="Jalali M."/>
            <person name="Kalush F."/>
            <person name="Karpen G.H."/>
            <person name="Ke Z."/>
            <person name="Kennison J.A."/>
            <person name="Ketchum K.A."/>
            <person name="Kimmel B.E."/>
            <person name="Kodira C.D."/>
            <person name="Kraft C.L."/>
            <person name="Kravitz S."/>
            <person name="Kulp D."/>
            <person name="Lai Z."/>
            <person name="Lasko P."/>
            <person name="Lei Y."/>
            <person name="Levitsky A.A."/>
            <person name="Li J.H."/>
            <person name="Li Z."/>
            <person name="Liang Y."/>
            <person name="Lin X."/>
            <person name="Liu X."/>
            <person name="Mattei B."/>
            <person name="McIntosh T.C."/>
            <person name="McLeod M.P."/>
            <person name="McPherson D."/>
            <person name="Merkulov G."/>
            <person name="Milshina N.V."/>
            <person name="Mobarry C."/>
            <person name="Morris J."/>
            <person name="Moshrefi A."/>
            <person name="Mount S.M."/>
            <person name="Moy M."/>
            <person name="Murphy B."/>
            <person name="Murphy L."/>
            <person name="Muzny D.M."/>
            <person name="Nelson D.L."/>
            <person name="Nelson D.R."/>
            <person name="Nelson K.A."/>
            <person name="Nixon K."/>
            <person name="Nusskern D.R."/>
            <person name="Pacleb J.M."/>
            <person name="Palazzolo M."/>
            <person name="Pittman G.S."/>
            <person name="Pan S."/>
            <person name="Pollard J."/>
            <person name="Puri V."/>
            <person name="Reese M.G."/>
            <person name="Reinert K."/>
            <person name="Remington K."/>
            <person name="Saunders R.D.C."/>
            <person name="Scheeler F."/>
            <person name="Shen H."/>
            <person name="Shue B.C."/>
            <person name="Siden-Kiamos I."/>
            <person name="Simpson M."/>
            <person name="Skupski M.P."/>
            <person name="Smith T.J."/>
            <person name="Spier E."/>
            <person name="Spradling A.C."/>
            <person name="Stapleton M."/>
            <person name="Strong R."/>
            <person name="Sun E."/>
            <person name="Svirskas R."/>
            <person name="Tector C."/>
            <person name="Turner R."/>
            <person name="Venter E."/>
            <person name="Wang A.H."/>
            <person name="Wang X."/>
            <person name="Wang Z.-Y."/>
            <person name="Wassarman D.A."/>
            <person name="Weinstock G.M."/>
            <person name="Weissenbach J."/>
            <person name="Williams S.M."/>
            <person name="Woodage T."/>
            <person name="Worley K.C."/>
            <person name="Wu D."/>
            <person name="Yang S."/>
            <person name="Yao Q.A."/>
            <person name="Ye J."/>
            <person name="Yeh R.-F."/>
            <person name="Zaveri J.S."/>
            <person name="Zhan M."/>
            <person name="Zhang G."/>
            <person name="Zhao Q."/>
            <person name="Zheng L."/>
            <person name="Zheng X.H."/>
            <person name="Zhong F.N."/>
            <person name="Zhong W."/>
            <person name="Zhou X."/>
            <person name="Zhu S.C."/>
            <person name="Zhu X."/>
            <person name="Smith H.O."/>
            <person name="Gibbs R.A."/>
            <person name="Myers E.W."/>
            <person name="Rubin G.M."/>
            <person name="Venter J.C."/>
        </authorList>
    </citation>
    <scope>NUCLEOTIDE SEQUENCE [LARGE SCALE GENOMIC DNA]</scope>
    <source>
        <strain>Berkeley</strain>
    </source>
</reference>
<reference key="3">
    <citation type="journal article" date="2002" name="Genome Biol.">
        <title>Annotation of the Drosophila melanogaster euchromatic genome: a systematic review.</title>
        <authorList>
            <person name="Misra S."/>
            <person name="Crosby M.A."/>
            <person name="Mungall C.J."/>
            <person name="Matthews B.B."/>
            <person name="Campbell K.S."/>
            <person name="Hradecky P."/>
            <person name="Huang Y."/>
            <person name="Kaminker J.S."/>
            <person name="Millburn G.H."/>
            <person name="Prochnik S.E."/>
            <person name="Smith C.D."/>
            <person name="Tupy J.L."/>
            <person name="Whitfield E.J."/>
            <person name="Bayraktaroglu L."/>
            <person name="Berman B.P."/>
            <person name="Bettencourt B.R."/>
            <person name="Celniker S.E."/>
            <person name="de Grey A.D.N.J."/>
            <person name="Drysdale R.A."/>
            <person name="Harris N.L."/>
            <person name="Richter J."/>
            <person name="Russo S."/>
            <person name="Schroeder A.J."/>
            <person name="Shu S.Q."/>
            <person name="Stapleton M."/>
            <person name="Yamada C."/>
            <person name="Ashburner M."/>
            <person name="Gelbart W.M."/>
            <person name="Rubin G.M."/>
            <person name="Lewis S.E."/>
        </authorList>
    </citation>
    <scope>GENOME REANNOTATION</scope>
    <source>
        <strain>Berkeley</strain>
    </source>
</reference>
<reference key="4">
    <citation type="journal article" date="1991" name="Biochem. Biophys. Res. Commun.">
        <title>Phosrestins I and II: arrestin homologs which undergo differential light-induced phosphorylation in the Drosophila photoreceptor in vivo.</title>
        <authorList>
            <person name="Matsumoto H."/>
            <person name="Yamada T."/>
        </authorList>
    </citation>
    <scope>PHOSPHORYLATION</scope>
    <scope>PROBABLE FUNCTION</scope>
</reference>
<reference key="5">
    <citation type="journal article" date="1993" name="Science">
        <title>Arrestin function in inactivation of G protein-coupled receptor rhodopsin in vivo.</title>
        <authorList>
            <person name="Dolph P.J."/>
            <person name="Ranganathan R."/>
            <person name="Colley N.J."/>
            <person name="Hardy R.W."/>
            <person name="Socolich M."/>
            <person name="Zuker C.S."/>
        </authorList>
    </citation>
    <scope>FUNCTION</scope>
    <scope>SUBCELLULAR LOCATION</scope>
    <scope>TISSUE SPECIFICITY</scope>
</reference>
<reference key="6">
    <citation type="journal article" date="1994" name="Neuron">
        <title>Phosrestin I undergoes the earliest light-induced phosphorylation by a calcium/calmodulin-dependent protein kinase in Drosophila photoreceptors.</title>
        <authorList>
            <person name="Matsumoto H."/>
            <person name="Kurien B.T."/>
            <person name="Takagi Y."/>
            <person name="Kahn E.S."/>
            <person name="Kinumi T."/>
            <person name="Komori N."/>
            <person name="Yamada T."/>
            <person name="Hayashi F."/>
            <person name="Isono K."/>
            <person name="Pak W.L."/>
        </authorList>
    </citation>
    <scope>PHOSPHORYLATION AT SER-366</scope>
</reference>
<reference key="7">
    <citation type="journal article" date="2023" name="IScience">
        <title>Visual and circadian regulation of Drosophila BDBT and BDBT effects on DBT and PER localization.</title>
        <authorList>
            <person name="Nolan R.B."/>
            <person name="Bontrager C."/>
            <person name="Bowser A."/>
            <person name="Corley A."/>
            <person name="Fiedler H."/>
            <person name="Flathers C."/>
            <person name="Francis L."/>
            <person name="Le A."/>
            <person name="Mahmoudjafari S."/>
            <person name="Nim T."/>
            <person name="Muolo C.E."/>
            <person name="Shores B."/>
            <person name="Viermann C."/>
            <person name="Waldren A."/>
            <person name="Zatezalo C."/>
            <person name="Fan J.Y."/>
            <person name="Price J.L."/>
        </authorList>
    </citation>
    <scope>FUNCTION</scope>
    <scope>MUTAGENESIS OF VAL-52</scope>
</reference>